<organism>
    <name type="scientific">Escherichia coli (strain UTI89 / UPEC)</name>
    <dbReference type="NCBI Taxonomy" id="364106"/>
    <lineage>
        <taxon>Bacteria</taxon>
        <taxon>Pseudomonadati</taxon>
        <taxon>Pseudomonadota</taxon>
        <taxon>Gammaproteobacteria</taxon>
        <taxon>Enterobacterales</taxon>
        <taxon>Enterobacteriaceae</taxon>
        <taxon>Escherichia</taxon>
    </lineage>
</organism>
<protein>
    <recommendedName>
        <fullName evidence="1">2-C-methyl-D-erythritol 2,4-cyclodiphosphate synthase</fullName>
        <shortName evidence="1">MECDP-synthase</shortName>
        <shortName evidence="1">MECPP-synthase</shortName>
        <shortName evidence="1">MECPS</shortName>
        <ecNumber evidence="1">4.6.1.12</ecNumber>
    </recommendedName>
</protein>
<name>ISPF_ECOUT</name>
<reference key="1">
    <citation type="journal article" date="2006" name="Proc. Natl. Acad. Sci. U.S.A.">
        <title>Identification of genes subject to positive selection in uropathogenic strains of Escherichia coli: a comparative genomics approach.</title>
        <authorList>
            <person name="Chen S.L."/>
            <person name="Hung C.-S."/>
            <person name="Xu J."/>
            <person name="Reigstad C.S."/>
            <person name="Magrini V."/>
            <person name="Sabo A."/>
            <person name="Blasiar D."/>
            <person name="Bieri T."/>
            <person name="Meyer R.R."/>
            <person name="Ozersky P."/>
            <person name="Armstrong J.R."/>
            <person name="Fulton R.S."/>
            <person name="Latreille J.P."/>
            <person name="Spieth J."/>
            <person name="Hooton T.M."/>
            <person name="Mardis E.R."/>
            <person name="Hultgren S.J."/>
            <person name="Gordon J.I."/>
        </authorList>
    </citation>
    <scope>NUCLEOTIDE SEQUENCE [LARGE SCALE GENOMIC DNA]</scope>
    <source>
        <strain>UTI89 / UPEC</strain>
    </source>
</reference>
<keyword id="KW-0414">Isoprene biosynthesis</keyword>
<keyword id="KW-0456">Lyase</keyword>
<keyword id="KW-0479">Metal-binding</keyword>
<sequence length="159" mass="16926">MRIGHGFDVHAFGGEGPIIIGGVRIPYEKGLLAHSDGDVALHALTDALLGAAALGDIGKLFPDTDPTFKGADSRELLREAWRRIQAKGYALGNVDVTIIAQAPRMLPHIPQMRVFIAEDLGCHMDDVNVKATTTEKLGFTGRGEGIACEAVALLIKATK</sequence>
<evidence type="ECO:0000255" key="1">
    <source>
        <dbReference type="HAMAP-Rule" id="MF_00107"/>
    </source>
</evidence>
<comment type="function">
    <text evidence="1">Involved in the biosynthesis of isopentenyl diphosphate (IPP) and dimethylallyl diphosphate (DMAPP), two major building blocks of isoprenoid compounds. Catalyzes the conversion of 4-diphosphocytidyl-2-C-methyl-D-erythritol 2-phosphate (CDP-ME2P) to 2-C-methyl-D-erythritol 2,4-cyclodiphosphate (ME-CPP) with a corresponding release of cytidine 5-monophosphate (CMP).</text>
</comment>
<comment type="catalytic activity">
    <reaction evidence="1">
        <text>4-CDP-2-C-methyl-D-erythritol 2-phosphate = 2-C-methyl-D-erythritol 2,4-cyclic diphosphate + CMP</text>
        <dbReference type="Rhea" id="RHEA:23864"/>
        <dbReference type="ChEBI" id="CHEBI:57919"/>
        <dbReference type="ChEBI" id="CHEBI:58483"/>
        <dbReference type="ChEBI" id="CHEBI:60377"/>
        <dbReference type="EC" id="4.6.1.12"/>
    </reaction>
</comment>
<comment type="cofactor">
    <cofactor evidence="1">
        <name>a divalent metal cation</name>
        <dbReference type="ChEBI" id="CHEBI:60240"/>
    </cofactor>
    <text evidence="1">Binds 1 divalent metal cation per subunit.</text>
</comment>
<comment type="pathway">
    <text evidence="1">Isoprenoid biosynthesis; isopentenyl diphosphate biosynthesis via DXP pathway; isopentenyl diphosphate from 1-deoxy-D-xylulose 5-phosphate: step 4/6.</text>
</comment>
<comment type="subunit">
    <text evidence="1">Homotrimer.</text>
</comment>
<comment type="similarity">
    <text evidence="1">Belongs to the IspF family.</text>
</comment>
<gene>
    <name evidence="1" type="primary">ispF</name>
    <name type="ordered locus">UTI89_C3117</name>
</gene>
<feature type="chain" id="PRO_1000022833" description="2-C-methyl-D-erythritol 2,4-cyclodiphosphate synthase">
    <location>
        <begin position="1"/>
        <end position="159"/>
    </location>
</feature>
<feature type="binding site" evidence="1">
    <location>
        <begin position="8"/>
        <end position="10"/>
    </location>
    <ligand>
        <name>4-CDP-2-C-methyl-D-erythritol 2-phosphate</name>
        <dbReference type="ChEBI" id="CHEBI:57919"/>
    </ligand>
</feature>
<feature type="binding site" evidence="1">
    <location>
        <position position="8"/>
    </location>
    <ligand>
        <name>a divalent metal cation</name>
        <dbReference type="ChEBI" id="CHEBI:60240"/>
    </ligand>
</feature>
<feature type="binding site" evidence="1">
    <location>
        <position position="10"/>
    </location>
    <ligand>
        <name>a divalent metal cation</name>
        <dbReference type="ChEBI" id="CHEBI:60240"/>
    </ligand>
</feature>
<feature type="binding site" evidence="1">
    <location>
        <begin position="34"/>
        <end position="35"/>
    </location>
    <ligand>
        <name>4-CDP-2-C-methyl-D-erythritol 2-phosphate</name>
        <dbReference type="ChEBI" id="CHEBI:57919"/>
    </ligand>
</feature>
<feature type="binding site" evidence="1">
    <location>
        <position position="42"/>
    </location>
    <ligand>
        <name>a divalent metal cation</name>
        <dbReference type="ChEBI" id="CHEBI:60240"/>
    </ligand>
</feature>
<feature type="binding site" evidence="1">
    <location>
        <begin position="56"/>
        <end position="58"/>
    </location>
    <ligand>
        <name>4-CDP-2-C-methyl-D-erythritol 2-phosphate</name>
        <dbReference type="ChEBI" id="CHEBI:57919"/>
    </ligand>
</feature>
<feature type="binding site" evidence="1">
    <location>
        <begin position="61"/>
        <end position="65"/>
    </location>
    <ligand>
        <name>4-CDP-2-C-methyl-D-erythritol 2-phosphate</name>
        <dbReference type="ChEBI" id="CHEBI:57919"/>
    </ligand>
</feature>
<feature type="binding site" evidence="1">
    <location>
        <begin position="100"/>
        <end position="106"/>
    </location>
    <ligand>
        <name>4-CDP-2-C-methyl-D-erythritol 2-phosphate</name>
        <dbReference type="ChEBI" id="CHEBI:57919"/>
    </ligand>
</feature>
<feature type="binding site" evidence="1">
    <location>
        <begin position="132"/>
        <end position="135"/>
    </location>
    <ligand>
        <name>4-CDP-2-C-methyl-D-erythritol 2-phosphate</name>
        <dbReference type="ChEBI" id="CHEBI:57919"/>
    </ligand>
</feature>
<feature type="binding site" evidence="1">
    <location>
        <position position="139"/>
    </location>
    <ligand>
        <name>4-CDP-2-C-methyl-D-erythritol 2-phosphate</name>
        <dbReference type="ChEBI" id="CHEBI:57919"/>
    </ligand>
</feature>
<feature type="binding site" evidence="1">
    <location>
        <position position="142"/>
    </location>
    <ligand>
        <name>4-CDP-2-C-methyl-D-erythritol 2-phosphate</name>
        <dbReference type="ChEBI" id="CHEBI:57919"/>
    </ligand>
</feature>
<feature type="site" description="Transition state stabilizer" evidence="1">
    <location>
        <position position="34"/>
    </location>
</feature>
<feature type="site" description="Transition state stabilizer" evidence="1">
    <location>
        <position position="133"/>
    </location>
</feature>
<proteinExistence type="inferred from homology"/>
<accession>Q1R7U5</accession>
<dbReference type="EC" id="4.6.1.12" evidence="1"/>
<dbReference type="EMBL" id="CP000243">
    <property type="protein sequence ID" value="ABE08569.1"/>
    <property type="molecule type" value="Genomic_DNA"/>
</dbReference>
<dbReference type="RefSeq" id="WP_001219247.1">
    <property type="nucleotide sequence ID" value="NZ_CP064825.1"/>
</dbReference>
<dbReference type="SMR" id="Q1R7U5"/>
<dbReference type="KEGG" id="eci:UTI89_C3117"/>
<dbReference type="HOGENOM" id="CLU_084630_2_0_6"/>
<dbReference type="UniPathway" id="UPA00056">
    <property type="reaction ID" value="UER00095"/>
</dbReference>
<dbReference type="Proteomes" id="UP000001952">
    <property type="component" value="Chromosome"/>
</dbReference>
<dbReference type="GO" id="GO:0008685">
    <property type="term" value="F:2-C-methyl-D-erythritol 2,4-cyclodiphosphate synthase activity"/>
    <property type="evidence" value="ECO:0007669"/>
    <property type="project" value="UniProtKB-UniRule"/>
</dbReference>
<dbReference type="GO" id="GO:0046872">
    <property type="term" value="F:metal ion binding"/>
    <property type="evidence" value="ECO:0007669"/>
    <property type="project" value="UniProtKB-KW"/>
</dbReference>
<dbReference type="GO" id="GO:0019288">
    <property type="term" value="P:isopentenyl diphosphate biosynthetic process, methylerythritol 4-phosphate pathway"/>
    <property type="evidence" value="ECO:0007669"/>
    <property type="project" value="UniProtKB-UniRule"/>
</dbReference>
<dbReference type="GO" id="GO:0016114">
    <property type="term" value="P:terpenoid biosynthetic process"/>
    <property type="evidence" value="ECO:0007669"/>
    <property type="project" value="InterPro"/>
</dbReference>
<dbReference type="CDD" id="cd00554">
    <property type="entry name" value="MECDP_synthase"/>
    <property type="match status" value="1"/>
</dbReference>
<dbReference type="FunFam" id="3.30.1330.50:FF:000001">
    <property type="entry name" value="2-C-methyl-D-erythritol 2,4-cyclodiphosphate synthase"/>
    <property type="match status" value="1"/>
</dbReference>
<dbReference type="Gene3D" id="3.30.1330.50">
    <property type="entry name" value="2-C-methyl-D-erythritol 2,4-cyclodiphosphate synthase"/>
    <property type="match status" value="1"/>
</dbReference>
<dbReference type="HAMAP" id="MF_00107">
    <property type="entry name" value="IspF"/>
    <property type="match status" value="1"/>
</dbReference>
<dbReference type="InterPro" id="IPR003526">
    <property type="entry name" value="MECDP_synthase"/>
</dbReference>
<dbReference type="InterPro" id="IPR020555">
    <property type="entry name" value="MECDP_synthase_CS"/>
</dbReference>
<dbReference type="InterPro" id="IPR036571">
    <property type="entry name" value="MECDP_synthase_sf"/>
</dbReference>
<dbReference type="NCBIfam" id="TIGR00151">
    <property type="entry name" value="ispF"/>
    <property type="match status" value="1"/>
</dbReference>
<dbReference type="PANTHER" id="PTHR43181">
    <property type="entry name" value="2-C-METHYL-D-ERYTHRITOL 2,4-CYCLODIPHOSPHATE SYNTHASE, CHLOROPLASTIC"/>
    <property type="match status" value="1"/>
</dbReference>
<dbReference type="PANTHER" id="PTHR43181:SF1">
    <property type="entry name" value="2-C-METHYL-D-ERYTHRITOL 2,4-CYCLODIPHOSPHATE SYNTHASE, CHLOROPLASTIC"/>
    <property type="match status" value="1"/>
</dbReference>
<dbReference type="Pfam" id="PF02542">
    <property type="entry name" value="YgbB"/>
    <property type="match status" value="1"/>
</dbReference>
<dbReference type="SUPFAM" id="SSF69765">
    <property type="entry name" value="IpsF-like"/>
    <property type="match status" value="1"/>
</dbReference>
<dbReference type="PROSITE" id="PS01350">
    <property type="entry name" value="ISPF"/>
    <property type="match status" value="1"/>
</dbReference>